<sequence length="33" mass="3750">MRSEQISGSSLNPSCRFSSAYSPVTRQRKDMSR</sequence>
<organism>
    <name type="scientific">Escherichia coli O157:H7</name>
    <dbReference type="NCBI Taxonomy" id="83334"/>
    <lineage>
        <taxon>Bacteria</taxon>
        <taxon>Pseudomonadati</taxon>
        <taxon>Pseudomonadota</taxon>
        <taxon>Gammaproteobacteria</taxon>
        <taxon>Enterobacterales</taxon>
        <taxon>Enterobacteriaceae</taxon>
        <taxon>Escherichia</taxon>
    </lineage>
</organism>
<reference key="1">
    <citation type="journal article" date="2001" name="Nature">
        <title>Genome sequence of enterohaemorrhagic Escherichia coli O157:H7.</title>
        <authorList>
            <person name="Perna N.T."/>
            <person name="Plunkett G. III"/>
            <person name="Burland V."/>
            <person name="Mau B."/>
            <person name="Glasner J.D."/>
            <person name="Rose D.J."/>
            <person name="Mayhew G.F."/>
            <person name="Evans P.S."/>
            <person name="Gregor J."/>
            <person name="Kirkpatrick H.A."/>
            <person name="Posfai G."/>
            <person name="Hackett J."/>
            <person name="Klink S."/>
            <person name="Boutin A."/>
            <person name="Shao Y."/>
            <person name="Miller L."/>
            <person name="Grotbeck E.J."/>
            <person name="Davis N.W."/>
            <person name="Lim A."/>
            <person name="Dimalanta E.T."/>
            <person name="Potamousis K."/>
            <person name="Apodaca J."/>
            <person name="Anantharaman T.S."/>
            <person name="Lin J."/>
            <person name="Yen G."/>
            <person name="Schwartz D.C."/>
            <person name="Welch R.A."/>
            <person name="Blattner F.R."/>
        </authorList>
    </citation>
    <scope>NUCLEOTIDE SEQUENCE [LARGE SCALE GENOMIC DNA]</scope>
    <source>
        <strain>O157:H7 / EDL933 / ATCC 700927 / EHEC</strain>
    </source>
</reference>
<reference key="2">
    <citation type="journal article" date="2001" name="DNA Res.">
        <title>Complete genome sequence of enterohemorrhagic Escherichia coli O157:H7 and genomic comparison with a laboratory strain K-12.</title>
        <authorList>
            <person name="Hayashi T."/>
            <person name="Makino K."/>
            <person name="Ohnishi M."/>
            <person name="Kurokawa K."/>
            <person name="Ishii K."/>
            <person name="Yokoyama K."/>
            <person name="Han C.-G."/>
            <person name="Ohtsubo E."/>
            <person name="Nakayama K."/>
            <person name="Murata T."/>
            <person name="Tanaka M."/>
            <person name="Tobe T."/>
            <person name="Iida T."/>
            <person name="Takami H."/>
            <person name="Honda T."/>
            <person name="Sasakawa C."/>
            <person name="Ogasawara N."/>
            <person name="Yasunaga T."/>
            <person name="Kuhara S."/>
            <person name="Shiba T."/>
            <person name="Hattori M."/>
            <person name="Shinagawa H."/>
        </authorList>
    </citation>
    <scope>NUCLEOTIDE SEQUENCE [LARGE SCALE GENOMIC DNA]</scope>
    <source>
        <strain>O157:H7 / Sakai / RIMD 0509952 / EHEC</strain>
    </source>
</reference>
<keyword id="KW-0428">Leader peptide</keyword>
<keyword id="KW-1185">Reference proteome</keyword>
<evidence type="ECO:0000256" key="1">
    <source>
        <dbReference type="SAM" id="MobiDB-lite"/>
    </source>
</evidence>
<protein>
    <recommendedName>
        <fullName>rho operon leader peptide</fullName>
    </recommendedName>
</protein>
<gene>
    <name type="primary">rhoL</name>
    <name type="ordered locus">Z5292</name>
    <name type="ordered locus">ECs4715</name>
</gene>
<name>LPRH_ECO57</name>
<accession>Q8XAT0</accession>
<accession>Q7A9F7</accession>
<dbReference type="EMBL" id="AE005174">
    <property type="protein sequence ID" value="AAG58976.1"/>
    <property type="molecule type" value="Genomic_DNA"/>
</dbReference>
<dbReference type="EMBL" id="BA000007">
    <property type="protein sequence ID" value="BAB38138.1"/>
    <property type="molecule type" value="Genomic_DNA"/>
</dbReference>
<dbReference type="PIR" id="C91218">
    <property type="entry name" value="C91218"/>
</dbReference>
<dbReference type="PIR" id="D86064">
    <property type="entry name" value="D86064"/>
</dbReference>
<dbReference type="RefSeq" id="NP_312742.1">
    <property type="nucleotide sequence ID" value="NC_002695.1"/>
</dbReference>
<dbReference type="RefSeq" id="WP_001295255.1">
    <property type="nucleotide sequence ID" value="NZ_VOAI01000017.1"/>
</dbReference>
<dbReference type="STRING" id="155864.Z5292"/>
<dbReference type="GeneID" id="93778162"/>
<dbReference type="KEGG" id="ece:Z5292"/>
<dbReference type="KEGG" id="ecs:ECs_4715"/>
<dbReference type="PATRIC" id="fig|83334.175.peg.2347"/>
<dbReference type="HOGENOM" id="CLU_3381617_0_0_6"/>
<dbReference type="Proteomes" id="UP000000558">
    <property type="component" value="Chromosome"/>
</dbReference>
<dbReference type="Proteomes" id="UP000002519">
    <property type="component" value="Chromosome"/>
</dbReference>
<dbReference type="NCBIfam" id="NF007433">
    <property type="entry name" value="PRK09979.1"/>
    <property type="match status" value="1"/>
</dbReference>
<feature type="peptide" id="PRO_0000045079" description="rho operon leader peptide">
    <location>
        <begin position="1"/>
        <end position="33"/>
    </location>
</feature>
<feature type="region of interest" description="Disordered" evidence="1">
    <location>
        <begin position="1"/>
        <end position="33"/>
    </location>
</feature>
<feature type="compositionally biased region" description="Polar residues" evidence="1">
    <location>
        <begin position="1"/>
        <end position="25"/>
    </location>
</feature>
<proteinExistence type="predicted"/>